<reference key="1">
    <citation type="journal article" date="1999" name="Nature">
        <title>Sequence and analysis of chromosome 2 of the plant Arabidopsis thaliana.</title>
        <authorList>
            <person name="Lin X."/>
            <person name="Kaul S."/>
            <person name="Rounsley S.D."/>
            <person name="Shea T.P."/>
            <person name="Benito M.-I."/>
            <person name="Town C.D."/>
            <person name="Fujii C.Y."/>
            <person name="Mason T.M."/>
            <person name="Bowman C.L."/>
            <person name="Barnstead M.E."/>
            <person name="Feldblyum T.V."/>
            <person name="Buell C.R."/>
            <person name="Ketchum K.A."/>
            <person name="Lee J.J."/>
            <person name="Ronning C.M."/>
            <person name="Koo H.L."/>
            <person name="Moffat K.S."/>
            <person name="Cronin L.A."/>
            <person name="Shen M."/>
            <person name="Pai G."/>
            <person name="Van Aken S."/>
            <person name="Umayam L."/>
            <person name="Tallon L.J."/>
            <person name="Gill J.E."/>
            <person name="Adams M.D."/>
            <person name="Carrera A.J."/>
            <person name="Creasy T.H."/>
            <person name="Goodman H.M."/>
            <person name="Somerville C.R."/>
            <person name="Copenhaver G.P."/>
            <person name="Preuss D."/>
            <person name="Nierman W.C."/>
            <person name="White O."/>
            <person name="Eisen J.A."/>
            <person name="Salzberg S.L."/>
            <person name="Fraser C.M."/>
            <person name="Venter J.C."/>
        </authorList>
    </citation>
    <scope>NUCLEOTIDE SEQUENCE [LARGE SCALE GENOMIC DNA]</scope>
    <source>
        <strain>cv. Columbia</strain>
    </source>
</reference>
<reference key="2">
    <citation type="journal article" date="2017" name="Plant J.">
        <title>Araport11: a complete reannotation of the Arabidopsis thaliana reference genome.</title>
        <authorList>
            <person name="Cheng C.Y."/>
            <person name="Krishnakumar V."/>
            <person name="Chan A.P."/>
            <person name="Thibaud-Nissen F."/>
            <person name="Schobel S."/>
            <person name="Town C.D."/>
        </authorList>
    </citation>
    <scope>GENOME REANNOTATION</scope>
    <source>
        <strain>cv. Columbia</strain>
    </source>
</reference>
<reference key="3">
    <citation type="submission" date="2004-09" db="EMBL/GenBank/DDBJ databases">
        <title>Large-scale analysis of RIKEN Arabidopsis full-length (RAFL) cDNAs.</title>
        <authorList>
            <person name="Totoki Y."/>
            <person name="Seki M."/>
            <person name="Ishida J."/>
            <person name="Nakajima M."/>
            <person name="Enju A."/>
            <person name="Kamiya A."/>
            <person name="Narusaka M."/>
            <person name="Shin-i T."/>
            <person name="Nakagawa M."/>
            <person name="Sakamoto N."/>
            <person name="Oishi K."/>
            <person name="Kohara Y."/>
            <person name="Kobayashi M."/>
            <person name="Toyoda A."/>
            <person name="Sakaki Y."/>
            <person name="Sakurai T."/>
            <person name="Iida K."/>
            <person name="Akiyama K."/>
            <person name="Satou M."/>
            <person name="Toyoda T."/>
            <person name="Konagaya A."/>
            <person name="Carninci P."/>
            <person name="Kawai J."/>
            <person name="Hayashizaki Y."/>
            <person name="Shinozaki K."/>
        </authorList>
    </citation>
    <scope>NUCLEOTIDE SEQUENCE [LARGE SCALE MRNA]</scope>
    <source>
        <strain>cv. Columbia</strain>
    </source>
</reference>
<reference key="4">
    <citation type="journal article" date="2004" name="Plant Cell">
        <title>Genome-wide analysis of Arabidopsis pentatricopeptide repeat proteins reveals their essential role in organelle biogenesis.</title>
        <authorList>
            <person name="Lurin C."/>
            <person name="Andres C."/>
            <person name="Aubourg S."/>
            <person name="Bellaoui M."/>
            <person name="Bitton F."/>
            <person name="Bruyere C."/>
            <person name="Caboche M."/>
            <person name="Debast C."/>
            <person name="Gualberto J."/>
            <person name="Hoffmann B."/>
            <person name="Lecharny A."/>
            <person name="Le Ret M."/>
            <person name="Martin-Magniette M.-L."/>
            <person name="Mireau H."/>
            <person name="Peeters N."/>
            <person name="Renou J.-P."/>
            <person name="Szurek B."/>
            <person name="Taconnat L."/>
            <person name="Small I."/>
        </authorList>
    </citation>
    <scope>GENE FAMILY</scope>
</reference>
<evidence type="ECO:0000256" key="1">
    <source>
        <dbReference type="SAM" id="MobiDB-lite"/>
    </source>
</evidence>
<evidence type="ECO:0000305" key="2"/>
<accession>Q680H3</accession>
<accession>Q9SLA5</accession>
<protein>
    <recommendedName>
        <fullName>Pentatricopeptide repeat-containing protein At2g25580</fullName>
    </recommendedName>
</protein>
<feature type="chain" id="PRO_0000356029" description="Pentatricopeptide repeat-containing protein At2g25580">
    <location>
        <begin position="1"/>
        <end position="615"/>
    </location>
</feature>
<feature type="repeat" description="PPR 1">
    <location>
        <begin position="288"/>
        <end position="318"/>
    </location>
</feature>
<feature type="repeat" description="PPR 2">
    <location>
        <begin position="319"/>
        <end position="353"/>
    </location>
</feature>
<feature type="repeat" description="PPR 3">
    <location>
        <begin position="354"/>
        <end position="389"/>
    </location>
</feature>
<feature type="repeat" description="PPR 4">
    <location>
        <begin position="390"/>
        <end position="420"/>
    </location>
</feature>
<feature type="region of interest" description="Disordered" evidence="1">
    <location>
        <begin position="40"/>
        <end position="98"/>
    </location>
</feature>
<feature type="region of interest" description="Type E(+) motif">
    <location>
        <begin position="490"/>
        <end position="520"/>
    </location>
</feature>
<feature type="region of interest" description="Type DYW motif">
    <location>
        <begin position="521"/>
        <end position="615"/>
    </location>
</feature>
<feature type="compositionally biased region" description="Polar residues" evidence="1">
    <location>
        <begin position="58"/>
        <end position="98"/>
    </location>
</feature>
<feature type="sequence conflict" description="In Ref. 3; BAD43657." evidence="2" ref="3">
    <original>N</original>
    <variation>D</variation>
    <location>
        <position position="351"/>
    </location>
</feature>
<dbReference type="EMBL" id="AC006053">
    <property type="protein sequence ID" value="AAD31361.1"/>
    <property type="status" value="ALT_INIT"/>
    <property type="molecule type" value="Genomic_DNA"/>
</dbReference>
<dbReference type="EMBL" id="CP002685">
    <property type="protein sequence ID" value="AEC07720.1"/>
    <property type="molecule type" value="Genomic_DNA"/>
</dbReference>
<dbReference type="EMBL" id="CP002685">
    <property type="protein sequence ID" value="ANM62263.1"/>
    <property type="molecule type" value="Genomic_DNA"/>
</dbReference>
<dbReference type="EMBL" id="AK175894">
    <property type="protein sequence ID" value="BAD43657.1"/>
    <property type="molecule type" value="mRNA"/>
</dbReference>
<dbReference type="PIR" id="B84650">
    <property type="entry name" value="B84650"/>
</dbReference>
<dbReference type="RefSeq" id="NP_001324433.1">
    <property type="nucleotide sequence ID" value="NM_001336003.1"/>
</dbReference>
<dbReference type="RefSeq" id="NP_180129.2">
    <property type="nucleotide sequence ID" value="NM_128116.3"/>
</dbReference>
<dbReference type="SMR" id="Q680H3"/>
<dbReference type="FunCoup" id="Q680H3">
    <property type="interactions" value="663"/>
</dbReference>
<dbReference type="STRING" id="3702.Q680H3"/>
<dbReference type="PaxDb" id="3702-AT2G25580.1"/>
<dbReference type="ProteomicsDB" id="250500"/>
<dbReference type="EnsemblPlants" id="AT2G25580.1">
    <property type="protein sequence ID" value="AT2G25580.1"/>
    <property type="gene ID" value="AT2G25580"/>
</dbReference>
<dbReference type="EnsemblPlants" id="AT2G25580.2">
    <property type="protein sequence ID" value="AT2G25580.2"/>
    <property type="gene ID" value="AT2G25580"/>
</dbReference>
<dbReference type="GeneID" id="817097"/>
<dbReference type="Gramene" id="AT2G25580.1">
    <property type="protein sequence ID" value="AT2G25580.1"/>
    <property type="gene ID" value="AT2G25580"/>
</dbReference>
<dbReference type="Gramene" id="AT2G25580.2">
    <property type="protein sequence ID" value="AT2G25580.2"/>
    <property type="gene ID" value="AT2G25580"/>
</dbReference>
<dbReference type="KEGG" id="ath:AT2G25580"/>
<dbReference type="Araport" id="AT2G25580"/>
<dbReference type="TAIR" id="AT2G25580">
    <property type="gene designation" value="MEF8"/>
</dbReference>
<dbReference type="eggNOG" id="KOG4197">
    <property type="taxonomic scope" value="Eukaryota"/>
</dbReference>
<dbReference type="HOGENOM" id="CLU_002706_45_0_1"/>
<dbReference type="InParanoid" id="Q680H3"/>
<dbReference type="OMA" id="MSMSKDY"/>
<dbReference type="PhylomeDB" id="Q680H3"/>
<dbReference type="PRO" id="PR:Q680H3"/>
<dbReference type="Proteomes" id="UP000006548">
    <property type="component" value="Chromosome 2"/>
</dbReference>
<dbReference type="ExpressionAtlas" id="Q680H3">
    <property type="expression patterns" value="baseline and differential"/>
</dbReference>
<dbReference type="GO" id="GO:0003723">
    <property type="term" value="F:RNA binding"/>
    <property type="evidence" value="ECO:0007669"/>
    <property type="project" value="InterPro"/>
</dbReference>
<dbReference type="GO" id="GO:0008270">
    <property type="term" value="F:zinc ion binding"/>
    <property type="evidence" value="ECO:0007669"/>
    <property type="project" value="InterPro"/>
</dbReference>
<dbReference type="GO" id="GO:0009451">
    <property type="term" value="P:RNA modification"/>
    <property type="evidence" value="ECO:0007669"/>
    <property type="project" value="InterPro"/>
</dbReference>
<dbReference type="FunFam" id="1.25.40.10:FF:000741">
    <property type="entry name" value="Pentatricopeptide repeat-containing protein At2g25580"/>
    <property type="match status" value="1"/>
</dbReference>
<dbReference type="Gene3D" id="1.25.40.10">
    <property type="entry name" value="Tetratricopeptide repeat domain"/>
    <property type="match status" value="2"/>
</dbReference>
<dbReference type="InterPro" id="IPR032867">
    <property type="entry name" value="DYW_dom"/>
</dbReference>
<dbReference type="InterPro" id="IPR002885">
    <property type="entry name" value="Pentatricopeptide_rpt"/>
</dbReference>
<dbReference type="InterPro" id="IPR046960">
    <property type="entry name" value="PPR_At4g14850-like_plant"/>
</dbReference>
<dbReference type="InterPro" id="IPR011990">
    <property type="entry name" value="TPR-like_helical_dom_sf"/>
</dbReference>
<dbReference type="NCBIfam" id="TIGR00756">
    <property type="entry name" value="PPR"/>
    <property type="match status" value="1"/>
</dbReference>
<dbReference type="PANTHER" id="PTHR47926:SF388">
    <property type="entry name" value="DYW DOMAIN-CONTAINING PROTEIN"/>
    <property type="match status" value="1"/>
</dbReference>
<dbReference type="PANTHER" id="PTHR47926">
    <property type="entry name" value="PENTATRICOPEPTIDE REPEAT-CONTAINING PROTEIN"/>
    <property type="match status" value="1"/>
</dbReference>
<dbReference type="Pfam" id="PF14432">
    <property type="entry name" value="DYW_deaminase"/>
    <property type="match status" value="1"/>
</dbReference>
<dbReference type="Pfam" id="PF01535">
    <property type="entry name" value="PPR"/>
    <property type="match status" value="2"/>
</dbReference>
<dbReference type="PROSITE" id="PS51375">
    <property type="entry name" value="PPR"/>
    <property type="match status" value="4"/>
</dbReference>
<keyword id="KW-1185">Reference proteome</keyword>
<keyword id="KW-0677">Repeat</keyword>
<comment type="similarity">
    <text evidence="2">Belongs to the PPR family. PCMP-H subfamily.</text>
</comment>
<comment type="sequence caution" evidence="2">
    <conflict type="erroneous initiation">
        <sequence resource="EMBL-CDS" id="AAD31361"/>
    </conflict>
</comment>
<comment type="online information" name="Pentatricopeptide repeat proteins">
    <link uri="https://ppr.plantenergy.uwa.edu.au"/>
</comment>
<proteinExistence type="evidence at transcript level"/>
<name>PP170_ARATH</name>
<gene>
    <name type="primary">PCMP-H75</name>
    <name type="ordered locus">At2g25580</name>
    <name type="ORF">F3N11.3</name>
</gene>
<organism>
    <name type="scientific">Arabidopsis thaliana</name>
    <name type="common">Mouse-ear cress</name>
    <dbReference type="NCBI Taxonomy" id="3702"/>
    <lineage>
        <taxon>Eukaryota</taxon>
        <taxon>Viridiplantae</taxon>
        <taxon>Streptophyta</taxon>
        <taxon>Embryophyta</taxon>
        <taxon>Tracheophyta</taxon>
        <taxon>Spermatophyta</taxon>
        <taxon>Magnoliopsida</taxon>
        <taxon>eudicotyledons</taxon>
        <taxon>Gunneridae</taxon>
        <taxon>Pentapetalae</taxon>
        <taxon>rosids</taxon>
        <taxon>malvids</taxon>
        <taxon>Brassicales</taxon>
        <taxon>Brassicaceae</taxon>
        <taxon>Camelineae</taxon>
        <taxon>Arabidopsis</taxon>
    </lineage>
</organism>
<sequence>MYTKLSLFPRKSSSLLSIANEKRIHQFLRNLCTAVERLDFGNSNDSSEMNPREGYNGRIQNRTGSSGEVSESIHTQSQSLGSNQGRNEQSWKQSPSLSNSQVQSQYQGNWYGTNSDYQNGVGSSWHSGKTIDREVYDMIMEFDEYCIQENVRVALTTMEKLEKKGYVMDFVRLLKLTQLCREGNVYYEVSVLEEAKVSVLAKIRALVNNLEANYLKYYTDIMIEEYDAFCKHGKVKKALYTIDILASMNYVVDLSRLLRLAKICGEAEGLQEAKTVHGKISASVSHLDLSSNHVLLEMYSNCGLANEAASVFEKMSEKNLETWCIIIRCFAKNGFGEDAIDMFSRFKEEGNIPDGQLFRGIFYACGMLGDVDEGLLHFESMSRDYGIAPSIEDYVSLVEMYALPGFLDEALEFVERMPMEPNVDVWETLMNLSRVHGNLELGDYCAEVVEFLDPTRLNKQSREGFIPVKASDVEKESLKKRSGILHGVKSSMQEFRAGDTNLPENDELFQLLRNLKMHMVEVGYVAETRMALHDIDQESKETLLLGHSERIAFARAVLNSAPRKPFTVIKNLRVCVDCHNALKIMSDIVGREVITRDIKRFHQMKNGACTCKDYW</sequence>